<proteinExistence type="inferred from homology"/>
<comment type="function">
    <text evidence="1">Associates with the EF-Tu.GDP complex and induces the exchange of GDP to GTP. It remains bound to the aminoacyl-tRNA.EF-Tu.GTP complex up to the GTP hydrolysis stage on the ribosome.</text>
</comment>
<comment type="subcellular location">
    <subcellularLocation>
        <location evidence="1">Cytoplasm</location>
    </subcellularLocation>
</comment>
<comment type="similarity">
    <text evidence="1">Belongs to the EF-Ts family.</text>
</comment>
<organism>
    <name type="scientific">Burkholderia orbicola (strain MC0-3)</name>
    <dbReference type="NCBI Taxonomy" id="406425"/>
    <lineage>
        <taxon>Bacteria</taxon>
        <taxon>Pseudomonadati</taxon>
        <taxon>Pseudomonadota</taxon>
        <taxon>Betaproteobacteria</taxon>
        <taxon>Burkholderiales</taxon>
        <taxon>Burkholderiaceae</taxon>
        <taxon>Burkholderia</taxon>
        <taxon>Burkholderia cepacia complex</taxon>
        <taxon>Burkholderia orbicola</taxon>
    </lineage>
</organism>
<name>EFTS_BURO0</name>
<sequence>MAAITASMVAELRAKTDAPMMECKKALTEADGDLAKAEELLRVKLGNKASKAASRVTAEGVVASFVGGNAGALVELNCETDFVAKNDDFLAFSKTVAELVATQNPADVAALSALPLEGSTVDAVRLALIGKIGENVSIRRFVRFETANKIATYLHGARIGVIVEYTGAEEQVGKDVAMHIAAMKPVALSSADVPAELIDTERRVAEQKAAESGKPAEIVAKMVDGSVQKYLKEVSLLNQTFVKNDKQTIEQMLKAANATVQKFALFVVGEGIEKRQDDFAAEVAAQVAAAKQQ</sequence>
<dbReference type="EMBL" id="CP000958">
    <property type="protein sequence ID" value="ACA91199.1"/>
    <property type="molecule type" value="Genomic_DNA"/>
</dbReference>
<dbReference type="RefSeq" id="WP_011549541.1">
    <property type="nucleotide sequence ID" value="NC_010508.1"/>
</dbReference>
<dbReference type="SMR" id="B1JUE9"/>
<dbReference type="GeneID" id="83048815"/>
<dbReference type="KEGG" id="bcm:Bcenmc03_2038"/>
<dbReference type="HOGENOM" id="CLU_047155_0_2_4"/>
<dbReference type="Proteomes" id="UP000002169">
    <property type="component" value="Chromosome 1"/>
</dbReference>
<dbReference type="GO" id="GO:0005737">
    <property type="term" value="C:cytoplasm"/>
    <property type="evidence" value="ECO:0007669"/>
    <property type="project" value="UniProtKB-SubCell"/>
</dbReference>
<dbReference type="GO" id="GO:0003746">
    <property type="term" value="F:translation elongation factor activity"/>
    <property type="evidence" value="ECO:0007669"/>
    <property type="project" value="UniProtKB-UniRule"/>
</dbReference>
<dbReference type="CDD" id="cd14275">
    <property type="entry name" value="UBA_EF-Ts"/>
    <property type="match status" value="1"/>
</dbReference>
<dbReference type="FunFam" id="1.10.286.20:FF:000001">
    <property type="entry name" value="Elongation factor Ts"/>
    <property type="match status" value="1"/>
</dbReference>
<dbReference type="FunFam" id="1.10.8.10:FF:000001">
    <property type="entry name" value="Elongation factor Ts"/>
    <property type="match status" value="1"/>
</dbReference>
<dbReference type="Gene3D" id="1.10.286.20">
    <property type="match status" value="1"/>
</dbReference>
<dbReference type="Gene3D" id="1.10.8.10">
    <property type="entry name" value="DNA helicase RuvA subunit, C-terminal domain"/>
    <property type="match status" value="1"/>
</dbReference>
<dbReference type="Gene3D" id="3.30.479.20">
    <property type="entry name" value="Elongation factor Ts, dimerisation domain"/>
    <property type="match status" value="2"/>
</dbReference>
<dbReference type="HAMAP" id="MF_00050">
    <property type="entry name" value="EF_Ts"/>
    <property type="match status" value="1"/>
</dbReference>
<dbReference type="InterPro" id="IPR036402">
    <property type="entry name" value="EF-Ts_dimer_sf"/>
</dbReference>
<dbReference type="InterPro" id="IPR001816">
    <property type="entry name" value="Transl_elong_EFTs/EF1B"/>
</dbReference>
<dbReference type="InterPro" id="IPR014039">
    <property type="entry name" value="Transl_elong_EFTs/EF1B_dimer"/>
</dbReference>
<dbReference type="InterPro" id="IPR018101">
    <property type="entry name" value="Transl_elong_Ts_CS"/>
</dbReference>
<dbReference type="InterPro" id="IPR009060">
    <property type="entry name" value="UBA-like_sf"/>
</dbReference>
<dbReference type="NCBIfam" id="TIGR00116">
    <property type="entry name" value="tsf"/>
    <property type="match status" value="1"/>
</dbReference>
<dbReference type="PANTHER" id="PTHR11741">
    <property type="entry name" value="ELONGATION FACTOR TS"/>
    <property type="match status" value="1"/>
</dbReference>
<dbReference type="PANTHER" id="PTHR11741:SF0">
    <property type="entry name" value="ELONGATION FACTOR TS, MITOCHONDRIAL"/>
    <property type="match status" value="1"/>
</dbReference>
<dbReference type="Pfam" id="PF00889">
    <property type="entry name" value="EF_TS"/>
    <property type="match status" value="1"/>
</dbReference>
<dbReference type="SUPFAM" id="SSF54713">
    <property type="entry name" value="Elongation factor Ts (EF-Ts), dimerisation domain"/>
    <property type="match status" value="2"/>
</dbReference>
<dbReference type="SUPFAM" id="SSF46934">
    <property type="entry name" value="UBA-like"/>
    <property type="match status" value="1"/>
</dbReference>
<dbReference type="PROSITE" id="PS01127">
    <property type="entry name" value="EF_TS_2"/>
    <property type="match status" value="1"/>
</dbReference>
<gene>
    <name evidence="1" type="primary">tsf</name>
    <name type="ordered locus">Bcenmc03_2038</name>
</gene>
<feature type="chain" id="PRO_1000116702" description="Elongation factor Ts">
    <location>
        <begin position="1"/>
        <end position="293"/>
    </location>
</feature>
<feature type="region of interest" description="Involved in Mg(2+) ion dislocation from EF-Tu" evidence="1">
    <location>
        <begin position="80"/>
        <end position="83"/>
    </location>
</feature>
<accession>B1JUE9</accession>
<evidence type="ECO:0000255" key="1">
    <source>
        <dbReference type="HAMAP-Rule" id="MF_00050"/>
    </source>
</evidence>
<protein>
    <recommendedName>
        <fullName evidence="1">Elongation factor Ts</fullName>
        <shortName evidence="1">EF-Ts</shortName>
    </recommendedName>
</protein>
<keyword id="KW-0963">Cytoplasm</keyword>
<keyword id="KW-0251">Elongation factor</keyword>
<keyword id="KW-0648">Protein biosynthesis</keyword>
<reference key="1">
    <citation type="submission" date="2008-02" db="EMBL/GenBank/DDBJ databases">
        <title>Complete sequence of chromosome 1 of Burkholderia cenocepacia MC0-3.</title>
        <authorList>
            <person name="Copeland A."/>
            <person name="Lucas S."/>
            <person name="Lapidus A."/>
            <person name="Barry K."/>
            <person name="Bruce D."/>
            <person name="Goodwin L."/>
            <person name="Glavina del Rio T."/>
            <person name="Dalin E."/>
            <person name="Tice H."/>
            <person name="Pitluck S."/>
            <person name="Chain P."/>
            <person name="Malfatti S."/>
            <person name="Shin M."/>
            <person name="Vergez L."/>
            <person name="Schmutz J."/>
            <person name="Larimer F."/>
            <person name="Land M."/>
            <person name="Hauser L."/>
            <person name="Kyrpides N."/>
            <person name="Mikhailova N."/>
            <person name="Tiedje J."/>
            <person name="Richardson P."/>
        </authorList>
    </citation>
    <scope>NUCLEOTIDE SEQUENCE [LARGE SCALE GENOMIC DNA]</scope>
    <source>
        <strain>MC0-3</strain>
    </source>
</reference>